<name>HMC1_METBA</name>
<feature type="chain" id="PRO_0000084002" description="Chromosomal protein MC1">
    <location>
        <begin position="1"/>
        <end position="93"/>
    </location>
</feature>
<feature type="region of interest" description="Disordered" evidence="1">
    <location>
        <begin position="1"/>
        <end position="43"/>
    </location>
</feature>
<dbReference type="PIR" id="A25343">
    <property type="entry name" value="A25343"/>
</dbReference>
<dbReference type="SMR" id="P06116"/>
<dbReference type="GO" id="GO:0003677">
    <property type="term" value="F:DNA binding"/>
    <property type="evidence" value="ECO:0007669"/>
    <property type="project" value="UniProtKB-KW"/>
</dbReference>
<dbReference type="GO" id="GO:0042262">
    <property type="term" value="P:DNA protection"/>
    <property type="evidence" value="ECO:0007669"/>
    <property type="project" value="InterPro"/>
</dbReference>
<dbReference type="Gene3D" id="3.10.470.10">
    <property type="entry name" value="Chromosomal protein MC1"/>
    <property type="match status" value="1"/>
</dbReference>
<dbReference type="InterPro" id="IPR008674">
    <property type="entry name" value="MC1"/>
</dbReference>
<dbReference type="InterPro" id="IPR036620">
    <property type="entry name" value="MC1_sf"/>
</dbReference>
<dbReference type="Pfam" id="PF05854">
    <property type="entry name" value="MC1"/>
    <property type="match status" value="1"/>
</dbReference>
<dbReference type="SUPFAM" id="SSF102875">
    <property type="entry name" value="Chromosomal protein MC1"/>
    <property type="match status" value="1"/>
</dbReference>
<comment type="function">
    <text>Protects DNA against thermal denaturation and modulates transcription.</text>
</comment>
<reference key="1">
    <citation type="journal article" date="1986" name="Eur. J. Biochem.">
        <title>Primary structure of the chromosomal protein HMb from the archaebacteria Methanosarcina barkeri.</title>
        <authorList>
            <person name="Laine B."/>
            <person name="Chartier F."/>
            <person name="Imbert M."/>
            <person name="Lewis R."/>
            <person name="Sautiere P."/>
        </authorList>
    </citation>
    <scope>PROTEIN SEQUENCE</scope>
    <source>
        <strain>ATCC 43569 / MS / DSM 800 / JCM 10043 / NBRC 100474</strain>
    </source>
</reference>
<reference key="2">
    <citation type="journal article" date="1990" name="Biochim. Biophys. Acta">
        <title>Conformational study of the chromosomal protein MC1 from the archaebacterium Methanosarcina barkeri.</title>
        <authorList>
            <person name="Imbert M."/>
            <person name="Laine B."/>
            <person name="Helbecque N."/>
            <person name="Mornon J.-P."/>
            <person name="Henichart J.-P."/>
            <person name="Sautiere P."/>
        </authorList>
    </citation>
    <scope>CONFORMATIONAL STUDIES</scope>
</reference>
<protein>
    <recommendedName>
        <fullName>Chromosomal protein MC1</fullName>
    </recommendedName>
    <alternativeName>
        <fullName>HMB</fullName>
    </alternativeName>
</protein>
<proteinExistence type="evidence at protein level"/>
<keyword id="KW-0903">Direct protein sequencing</keyword>
<keyword id="KW-0238">DNA-binding</keyword>
<accession>P06116</accession>
<evidence type="ECO:0000256" key="1">
    <source>
        <dbReference type="SAM" id="MobiDB-lite"/>
    </source>
</evidence>
<sequence>SNTRNFVLRDEEGNEHGVFTGKQPRQAALKAANRGDGTKSNPDVIRLRERGTKKVHVFKAWKEMVEAPKNRPDWMPEKISKPFVKKEKIEKIE</sequence>
<organism>
    <name type="scientific">Methanosarcina barkeri</name>
    <dbReference type="NCBI Taxonomy" id="2208"/>
    <lineage>
        <taxon>Archaea</taxon>
        <taxon>Methanobacteriati</taxon>
        <taxon>Methanobacteriota</taxon>
        <taxon>Stenosarchaea group</taxon>
        <taxon>Methanomicrobia</taxon>
        <taxon>Methanosarcinales</taxon>
        <taxon>Methanosarcinaceae</taxon>
        <taxon>Methanosarcina</taxon>
    </lineage>
</organism>